<feature type="chain" id="PRO_1000062969" description="Thiosulfate sulfurtransferase GlpE">
    <location>
        <begin position="1"/>
        <end position="109"/>
    </location>
</feature>
<feature type="domain" description="Rhodanese" evidence="1">
    <location>
        <begin position="16"/>
        <end position="104"/>
    </location>
</feature>
<feature type="active site" description="Cysteine persulfide intermediate" evidence="1">
    <location>
        <position position="64"/>
    </location>
</feature>
<accession>Q1IG23</accession>
<evidence type="ECO:0000255" key="1">
    <source>
        <dbReference type="HAMAP-Rule" id="MF_01009"/>
    </source>
</evidence>
<gene>
    <name evidence="1" type="primary">glpE</name>
    <name type="ordered locus">PSEEN0425</name>
</gene>
<comment type="function">
    <text evidence="1">Transferase that catalyzes the transfer of sulfur from thiosulfate to thiophilic acceptors such as cyanide or dithiols. May function in a CysM-independent thiosulfate assimilation pathway by catalyzing the conversion of thiosulfate to sulfite, which can then be used for L-cysteine biosynthesis.</text>
</comment>
<comment type="catalytic activity">
    <reaction evidence="1">
        <text>thiosulfate + hydrogen cyanide = thiocyanate + sulfite + 2 H(+)</text>
        <dbReference type="Rhea" id="RHEA:16881"/>
        <dbReference type="ChEBI" id="CHEBI:15378"/>
        <dbReference type="ChEBI" id="CHEBI:17359"/>
        <dbReference type="ChEBI" id="CHEBI:18022"/>
        <dbReference type="ChEBI" id="CHEBI:18407"/>
        <dbReference type="ChEBI" id="CHEBI:33542"/>
        <dbReference type="EC" id="2.8.1.1"/>
    </reaction>
</comment>
<comment type="catalytic activity">
    <reaction evidence="1">
        <text>thiosulfate + [thioredoxin]-dithiol = [thioredoxin]-disulfide + hydrogen sulfide + sulfite + 2 H(+)</text>
        <dbReference type="Rhea" id="RHEA:83859"/>
        <dbReference type="Rhea" id="RHEA-COMP:10698"/>
        <dbReference type="Rhea" id="RHEA-COMP:10700"/>
        <dbReference type="ChEBI" id="CHEBI:15378"/>
        <dbReference type="ChEBI" id="CHEBI:17359"/>
        <dbReference type="ChEBI" id="CHEBI:29919"/>
        <dbReference type="ChEBI" id="CHEBI:29950"/>
        <dbReference type="ChEBI" id="CHEBI:33542"/>
        <dbReference type="ChEBI" id="CHEBI:50058"/>
    </reaction>
</comment>
<comment type="subcellular location">
    <subcellularLocation>
        <location evidence="1">Cytoplasm</location>
    </subcellularLocation>
</comment>
<comment type="similarity">
    <text evidence="1">Belongs to the GlpE family.</text>
</comment>
<dbReference type="EC" id="2.8.1.1" evidence="1"/>
<dbReference type="EMBL" id="CT573326">
    <property type="protein sequence ID" value="CAK13379.1"/>
    <property type="molecule type" value="Genomic_DNA"/>
</dbReference>
<dbReference type="RefSeq" id="WP_011531836.1">
    <property type="nucleotide sequence ID" value="NC_008027.1"/>
</dbReference>
<dbReference type="SMR" id="Q1IG23"/>
<dbReference type="STRING" id="384676.PSEEN0425"/>
<dbReference type="GeneID" id="32803760"/>
<dbReference type="KEGG" id="pen:PSEEN0425"/>
<dbReference type="eggNOG" id="COG0607">
    <property type="taxonomic scope" value="Bacteria"/>
</dbReference>
<dbReference type="HOGENOM" id="CLU_089574_14_0_6"/>
<dbReference type="OrthoDB" id="9811849at2"/>
<dbReference type="Proteomes" id="UP000000658">
    <property type="component" value="Chromosome"/>
</dbReference>
<dbReference type="GO" id="GO:0005737">
    <property type="term" value="C:cytoplasm"/>
    <property type="evidence" value="ECO:0007669"/>
    <property type="project" value="UniProtKB-SubCell"/>
</dbReference>
<dbReference type="GO" id="GO:0004792">
    <property type="term" value="F:thiosulfate-cyanide sulfurtransferase activity"/>
    <property type="evidence" value="ECO:0007669"/>
    <property type="project" value="UniProtKB-UniRule"/>
</dbReference>
<dbReference type="GO" id="GO:0006071">
    <property type="term" value="P:glycerol metabolic process"/>
    <property type="evidence" value="ECO:0007669"/>
    <property type="project" value="UniProtKB-UniRule"/>
</dbReference>
<dbReference type="CDD" id="cd01444">
    <property type="entry name" value="GlpE_ST"/>
    <property type="match status" value="1"/>
</dbReference>
<dbReference type="Gene3D" id="3.40.250.10">
    <property type="entry name" value="Rhodanese-like domain"/>
    <property type="match status" value="1"/>
</dbReference>
<dbReference type="HAMAP" id="MF_01009">
    <property type="entry name" value="Thiosulf_sulfurtr"/>
    <property type="match status" value="1"/>
</dbReference>
<dbReference type="InterPro" id="IPR050229">
    <property type="entry name" value="GlpE_sulfurtransferase"/>
</dbReference>
<dbReference type="InterPro" id="IPR001763">
    <property type="entry name" value="Rhodanese-like_dom"/>
</dbReference>
<dbReference type="InterPro" id="IPR036873">
    <property type="entry name" value="Rhodanese-like_dom_sf"/>
</dbReference>
<dbReference type="InterPro" id="IPR023695">
    <property type="entry name" value="Thiosulf_sulfurTrfase"/>
</dbReference>
<dbReference type="NCBIfam" id="NF001195">
    <property type="entry name" value="PRK00162.1"/>
    <property type="match status" value="1"/>
</dbReference>
<dbReference type="PANTHER" id="PTHR43031">
    <property type="entry name" value="FAD-DEPENDENT OXIDOREDUCTASE"/>
    <property type="match status" value="1"/>
</dbReference>
<dbReference type="PANTHER" id="PTHR43031:SF6">
    <property type="entry name" value="THIOSULFATE SULFURTRANSFERASE GLPE"/>
    <property type="match status" value="1"/>
</dbReference>
<dbReference type="Pfam" id="PF00581">
    <property type="entry name" value="Rhodanese"/>
    <property type="match status" value="1"/>
</dbReference>
<dbReference type="SMART" id="SM00450">
    <property type="entry name" value="RHOD"/>
    <property type="match status" value="1"/>
</dbReference>
<dbReference type="SUPFAM" id="SSF52821">
    <property type="entry name" value="Rhodanese/Cell cycle control phosphatase"/>
    <property type="match status" value="1"/>
</dbReference>
<dbReference type="PROSITE" id="PS50206">
    <property type="entry name" value="RHODANESE_3"/>
    <property type="match status" value="1"/>
</dbReference>
<proteinExistence type="inferred from homology"/>
<protein>
    <recommendedName>
        <fullName evidence="1">Thiosulfate sulfurtransferase GlpE</fullName>
        <ecNumber evidence="1">2.8.1.1</ecNumber>
    </recommendedName>
</protein>
<name>GLPE_PSEE4</name>
<keyword id="KW-0963">Cytoplasm</keyword>
<keyword id="KW-0808">Transferase</keyword>
<reference key="1">
    <citation type="journal article" date="2006" name="Nat. Biotechnol.">
        <title>Complete genome sequence of the entomopathogenic and metabolically versatile soil bacterium Pseudomonas entomophila.</title>
        <authorList>
            <person name="Vodovar N."/>
            <person name="Vallenet D."/>
            <person name="Cruveiller S."/>
            <person name="Rouy Z."/>
            <person name="Barbe V."/>
            <person name="Acosta C."/>
            <person name="Cattolico L."/>
            <person name="Jubin C."/>
            <person name="Lajus A."/>
            <person name="Segurens B."/>
            <person name="Vacherie B."/>
            <person name="Wincker P."/>
            <person name="Weissenbach J."/>
            <person name="Lemaitre B."/>
            <person name="Medigue C."/>
            <person name="Boccard F."/>
        </authorList>
    </citation>
    <scope>NUCLEOTIDE SEQUENCE [LARGE SCALE GENOMIC DNA]</scope>
    <source>
        <strain>L48</strain>
    </source>
</reference>
<sequence length="109" mass="11629">MSEFKRISPEQALALRAEGAVVVDIRDPQAYAAGHITGATHLDNHSVADFIRNADLDAPTLVVCYHGNSSQSAAAYLVGQGFSNVYSIDGGFELWRSTYPGETAQGNAE</sequence>
<organism>
    <name type="scientific">Pseudomonas entomophila (strain L48)</name>
    <dbReference type="NCBI Taxonomy" id="384676"/>
    <lineage>
        <taxon>Bacteria</taxon>
        <taxon>Pseudomonadati</taxon>
        <taxon>Pseudomonadota</taxon>
        <taxon>Gammaproteobacteria</taxon>
        <taxon>Pseudomonadales</taxon>
        <taxon>Pseudomonadaceae</taxon>
        <taxon>Pseudomonas</taxon>
    </lineage>
</organism>